<sequence>MTDKAHQCVIIGIAGASASGKSLIASTLYRELREQVGDQHIGVIPEDGYYKDQSHLSMEERVKTNYDHPSAMDHNLLLEHLQALKAGKPVELPLYSYTEHTRKKETVHLEPKKVIILEGILLLTDIRLRQEMNFSIFVDTPLDICLMRRMKRDVNERGRSMDSVMAQYQKTVRPMFLQFIEPSKQYADIIVPRGGKNRIAIDILKAKISQFFE</sequence>
<comment type="catalytic activity">
    <reaction evidence="1">
        <text>uridine + ATP = UMP + ADP + H(+)</text>
        <dbReference type="Rhea" id="RHEA:16825"/>
        <dbReference type="ChEBI" id="CHEBI:15378"/>
        <dbReference type="ChEBI" id="CHEBI:16704"/>
        <dbReference type="ChEBI" id="CHEBI:30616"/>
        <dbReference type="ChEBI" id="CHEBI:57865"/>
        <dbReference type="ChEBI" id="CHEBI:456216"/>
        <dbReference type="EC" id="2.7.1.48"/>
    </reaction>
</comment>
<comment type="catalytic activity">
    <reaction evidence="1">
        <text>cytidine + ATP = CMP + ADP + H(+)</text>
        <dbReference type="Rhea" id="RHEA:24674"/>
        <dbReference type="ChEBI" id="CHEBI:15378"/>
        <dbReference type="ChEBI" id="CHEBI:17562"/>
        <dbReference type="ChEBI" id="CHEBI:30616"/>
        <dbReference type="ChEBI" id="CHEBI:60377"/>
        <dbReference type="ChEBI" id="CHEBI:456216"/>
        <dbReference type="EC" id="2.7.1.48"/>
    </reaction>
</comment>
<comment type="pathway">
    <text evidence="1">Pyrimidine metabolism; CTP biosynthesis via salvage pathway; CTP from cytidine: step 1/3.</text>
</comment>
<comment type="pathway">
    <text evidence="1">Pyrimidine metabolism; UMP biosynthesis via salvage pathway; UMP from uridine: step 1/1.</text>
</comment>
<comment type="subcellular location">
    <subcellularLocation>
        <location evidence="1">Cytoplasm</location>
    </subcellularLocation>
</comment>
<comment type="similarity">
    <text evidence="1">Belongs to the uridine kinase family.</text>
</comment>
<name>URK_YERPP</name>
<proteinExistence type="inferred from homology"/>
<organism>
    <name type="scientific">Yersinia pestis (strain Pestoides F)</name>
    <dbReference type="NCBI Taxonomy" id="386656"/>
    <lineage>
        <taxon>Bacteria</taxon>
        <taxon>Pseudomonadati</taxon>
        <taxon>Pseudomonadota</taxon>
        <taxon>Gammaproteobacteria</taxon>
        <taxon>Enterobacterales</taxon>
        <taxon>Yersiniaceae</taxon>
        <taxon>Yersinia</taxon>
    </lineage>
</organism>
<evidence type="ECO:0000255" key="1">
    <source>
        <dbReference type="HAMAP-Rule" id="MF_00551"/>
    </source>
</evidence>
<accession>A4TKM7</accession>
<dbReference type="EC" id="2.7.1.48" evidence="1"/>
<dbReference type="EMBL" id="CP000668">
    <property type="protein sequence ID" value="ABP39839.1"/>
    <property type="molecule type" value="Genomic_DNA"/>
</dbReference>
<dbReference type="RefSeq" id="WP_002211872.1">
    <property type="nucleotide sequence ID" value="NZ_CP009715.1"/>
</dbReference>
<dbReference type="SMR" id="A4TKM7"/>
<dbReference type="GeneID" id="57977044"/>
<dbReference type="KEGG" id="ypp:YPDSF_1452"/>
<dbReference type="PATRIC" id="fig|386656.14.peg.2331"/>
<dbReference type="UniPathway" id="UPA00574">
    <property type="reaction ID" value="UER00637"/>
</dbReference>
<dbReference type="UniPathway" id="UPA00579">
    <property type="reaction ID" value="UER00640"/>
</dbReference>
<dbReference type="GO" id="GO:0005737">
    <property type="term" value="C:cytoplasm"/>
    <property type="evidence" value="ECO:0007669"/>
    <property type="project" value="UniProtKB-SubCell"/>
</dbReference>
<dbReference type="GO" id="GO:0005524">
    <property type="term" value="F:ATP binding"/>
    <property type="evidence" value="ECO:0007669"/>
    <property type="project" value="UniProtKB-UniRule"/>
</dbReference>
<dbReference type="GO" id="GO:0043771">
    <property type="term" value="F:cytidine kinase activity"/>
    <property type="evidence" value="ECO:0007669"/>
    <property type="project" value="RHEA"/>
</dbReference>
<dbReference type="GO" id="GO:0004849">
    <property type="term" value="F:uridine kinase activity"/>
    <property type="evidence" value="ECO:0007669"/>
    <property type="project" value="UniProtKB-UniRule"/>
</dbReference>
<dbReference type="GO" id="GO:0044211">
    <property type="term" value="P:CTP salvage"/>
    <property type="evidence" value="ECO:0007669"/>
    <property type="project" value="UniProtKB-UniRule"/>
</dbReference>
<dbReference type="GO" id="GO:0044206">
    <property type="term" value="P:UMP salvage"/>
    <property type="evidence" value="ECO:0007669"/>
    <property type="project" value="UniProtKB-UniRule"/>
</dbReference>
<dbReference type="CDD" id="cd02023">
    <property type="entry name" value="UMPK"/>
    <property type="match status" value="1"/>
</dbReference>
<dbReference type="FunFam" id="3.40.50.300:FF:000252">
    <property type="entry name" value="Uridine kinase"/>
    <property type="match status" value="1"/>
</dbReference>
<dbReference type="Gene3D" id="3.40.50.300">
    <property type="entry name" value="P-loop containing nucleotide triphosphate hydrolases"/>
    <property type="match status" value="1"/>
</dbReference>
<dbReference type="HAMAP" id="MF_00551">
    <property type="entry name" value="Uridine_kinase"/>
    <property type="match status" value="1"/>
</dbReference>
<dbReference type="InterPro" id="IPR027417">
    <property type="entry name" value="P-loop_NTPase"/>
</dbReference>
<dbReference type="InterPro" id="IPR006083">
    <property type="entry name" value="PRK/URK"/>
</dbReference>
<dbReference type="InterPro" id="IPR026008">
    <property type="entry name" value="Uridine_kinase"/>
</dbReference>
<dbReference type="InterPro" id="IPR000764">
    <property type="entry name" value="Uridine_kinase-like"/>
</dbReference>
<dbReference type="NCBIfam" id="NF004018">
    <property type="entry name" value="PRK05480.1"/>
    <property type="match status" value="1"/>
</dbReference>
<dbReference type="NCBIfam" id="TIGR00235">
    <property type="entry name" value="udk"/>
    <property type="match status" value="1"/>
</dbReference>
<dbReference type="PANTHER" id="PTHR10285">
    <property type="entry name" value="URIDINE KINASE"/>
    <property type="match status" value="1"/>
</dbReference>
<dbReference type="Pfam" id="PF00485">
    <property type="entry name" value="PRK"/>
    <property type="match status" value="1"/>
</dbReference>
<dbReference type="PRINTS" id="PR00988">
    <property type="entry name" value="URIDINKINASE"/>
</dbReference>
<dbReference type="SUPFAM" id="SSF52540">
    <property type="entry name" value="P-loop containing nucleoside triphosphate hydrolases"/>
    <property type="match status" value="1"/>
</dbReference>
<feature type="chain" id="PRO_1000017918" description="Uridine kinase">
    <location>
        <begin position="1"/>
        <end position="213"/>
    </location>
</feature>
<feature type="binding site" evidence="1">
    <location>
        <begin position="15"/>
        <end position="22"/>
    </location>
    <ligand>
        <name>ATP</name>
        <dbReference type="ChEBI" id="CHEBI:30616"/>
    </ligand>
</feature>
<reference key="1">
    <citation type="submission" date="2007-02" db="EMBL/GenBank/DDBJ databases">
        <title>Complete sequence of chromosome of Yersinia pestis Pestoides F.</title>
        <authorList>
            <consortium name="US DOE Joint Genome Institute"/>
            <person name="Copeland A."/>
            <person name="Lucas S."/>
            <person name="Lapidus A."/>
            <person name="Barry K."/>
            <person name="Detter J.C."/>
            <person name="Glavina del Rio T."/>
            <person name="Hammon N."/>
            <person name="Israni S."/>
            <person name="Dalin E."/>
            <person name="Tice H."/>
            <person name="Pitluck S."/>
            <person name="Di Bartolo G."/>
            <person name="Chain P."/>
            <person name="Malfatti S."/>
            <person name="Shin M."/>
            <person name="Vergez L."/>
            <person name="Schmutz J."/>
            <person name="Larimer F."/>
            <person name="Land M."/>
            <person name="Hauser L."/>
            <person name="Worsham P."/>
            <person name="Chu M."/>
            <person name="Bearden S."/>
            <person name="Garcia E."/>
            <person name="Richardson P."/>
        </authorList>
    </citation>
    <scope>NUCLEOTIDE SEQUENCE [LARGE SCALE GENOMIC DNA]</scope>
    <source>
        <strain>Pestoides F</strain>
    </source>
</reference>
<gene>
    <name evidence="1" type="primary">udk</name>
    <name type="ordered locus">YPDSF_1452</name>
</gene>
<keyword id="KW-0067">ATP-binding</keyword>
<keyword id="KW-0963">Cytoplasm</keyword>
<keyword id="KW-0418">Kinase</keyword>
<keyword id="KW-0547">Nucleotide-binding</keyword>
<keyword id="KW-0808">Transferase</keyword>
<protein>
    <recommendedName>
        <fullName evidence="1">Uridine kinase</fullName>
        <ecNumber evidence="1">2.7.1.48</ecNumber>
    </recommendedName>
    <alternativeName>
        <fullName evidence="1">Cytidine monophosphokinase</fullName>
    </alternativeName>
    <alternativeName>
        <fullName evidence="1">Uridine monophosphokinase</fullName>
    </alternativeName>
</protein>